<proteinExistence type="inferred from homology"/>
<protein>
    <recommendedName>
        <fullName>Indian hedgehog protein</fullName>
        <shortName>IHH</shortName>
    </recommendedName>
</protein>
<evidence type="ECO:0000250" key="1"/>
<evidence type="ECO:0000250" key="2">
    <source>
        <dbReference type="UniProtKB" id="Q14623"/>
    </source>
</evidence>
<evidence type="ECO:0000305" key="3"/>
<feature type="chain" id="PRO_0000058742" description="Indian hedgehog protein">
    <location>
        <begin position="1" status="less than"/>
        <end position="58" status="greater than"/>
    </location>
</feature>
<feature type="binding site" evidence="2">
    <location>
        <position position="13"/>
    </location>
    <ligand>
        <name>Ca(2+)</name>
        <dbReference type="ChEBI" id="CHEBI:29108"/>
        <label>1</label>
    </ligand>
</feature>
<feature type="binding site" evidence="2">
    <location>
        <position position="14"/>
    </location>
    <ligand>
        <name>Ca(2+)</name>
        <dbReference type="ChEBI" id="CHEBI:29108"/>
        <label>1</label>
    </ligand>
</feature>
<feature type="binding site" evidence="2">
    <location>
        <position position="14"/>
    </location>
    <ligand>
        <name>Ca(2+)</name>
        <dbReference type="ChEBI" id="CHEBI:29108"/>
        <label>2</label>
    </ligand>
</feature>
<feature type="binding site" evidence="2">
    <location>
        <position position="17"/>
    </location>
    <ligand>
        <name>Ca(2+)</name>
        <dbReference type="ChEBI" id="CHEBI:29108"/>
        <label>2</label>
    </ligand>
</feature>
<feature type="binding site" evidence="2">
    <location>
        <position position="19"/>
    </location>
    <ligand>
        <name>Ca(2+)</name>
        <dbReference type="ChEBI" id="CHEBI:29108"/>
        <label>2</label>
    </ligand>
</feature>
<feature type="binding site" evidence="2">
    <location>
        <position position="28"/>
    </location>
    <ligand>
        <name>Zn(2+)</name>
        <dbReference type="ChEBI" id="CHEBI:29105"/>
    </ligand>
</feature>
<feature type="binding site" evidence="2">
    <location>
        <position position="35"/>
    </location>
    <ligand>
        <name>Zn(2+)</name>
        <dbReference type="ChEBI" id="CHEBI:29105"/>
    </ligand>
</feature>
<feature type="non-terminal residue">
    <location>
        <position position="1"/>
    </location>
</feature>
<feature type="non-terminal residue">
    <location>
        <position position="58"/>
    </location>
</feature>
<keyword id="KW-0068">Autocatalytic cleavage</keyword>
<keyword id="KW-0106">Calcium</keyword>
<keyword id="KW-1003">Cell membrane</keyword>
<keyword id="KW-0217">Developmental protein</keyword>
<keyword id="KW-0378">Hydrolase</keyword>
<keyword id="KW-0449">Lipoprotein</keyword>
<keyword id="KW-0472">Membrane</keyword>
<keyword id="KW-0479">Metal-binding</keyword>
<keyword id="KW-0564">Palmitate</keyword>
<keyword id="KW-0645">Protease</keyword>
<keyword id="KW-0964">Secreted</keyword>
<keyword id="KW-0862">Zinc</keyword>
<gene>
    <name type="primary">ihh</name>
</gene>
<dbReference type="EMBL" id="U51377">
    <property type="protein sequence ID" value="AAB38606.1"/>
    <property type="molecule type" value="Genomic_DNA"/>
</dbReference>
<dbReference type="SMR" id="P79719"/>
<dbReference type="GO" id="GO:0005615">
    <property type="term" value="C:extracellular space"/>
    <property type="evidence" value="ECO:0007669"/>
    <property type="project" value="TreeGrafter"/>
</dbReference>
<dbReference type="GO" id="GO:0005886">
    <property type="term" value="C:plasma membrane"/>
    <property type="evidence" value="ECO:0007669"/>
    <property type="project" value="UniProtKB-SubCell"/>
</dbReference>
<dbReference type="GO" id="GO:0005509">
    <property type="term" value="F:calcium ion binding"/>
    <property type="evidence" value="ECO:0007669"/>
    <property type="project" value="TreeGrafter"/>
</dbReference>
<dbReference type="GO" id="GO:0005113">
    <property type="term" value="F:patched binding"/>
    <property type="evidence" value="ECO:0007669"/>
    <property type="project" value="TreeGrafter"/>
</dbReference>
<dbReference type="GO" id="GO:0008233">
    <property type="term" value="F:peptidase activity"/>
    <property type="evidence" value="ECO:0007669"/>
    <property type="project" value="UniProtKB-KW"/>
</dbReference>
<dbReference type="GO" id="GO:0001708">
    <property type="term" value="P:cell fate specification"/>
    <property type="evidence" value="ECO:0007669"/>
    <property type="project" value="TreeGrafter"/>
</dbReference>
<dbReference type="GO" id="GO:0007267">
    <property type="term" value="P:cell-cell signaling"/>
    <property type="evidence" value="ECO:0007669"/>
    <property type="project" value="InterPro"/>
</dbReference>
<dbReference type="GO" id="GO:0006508">
    <property type="term" value="P:proteolysis"/>
    <property type="evidence" value="ECO:0007669"/>
    <property type="project" value="UniProtKB-KW"/>
</dbReference>
<dbReference type="GO" id="GO:0010468">
    <property type="term" value="P:regulation of gene expression"/>
    <property type="evidence" value="ECO:0007669"/>
    <property type="project" value="TreeGrafter"/>
</dbReference>
<dbReference type="GO" id="GO:0007224">
    <property type="term" value="P:smoothened signaling pathway"/>
    <property type="evidence" value="ECO:0007669"/>
    <property type="project" value="TreeGrafter"/>
</dbReference>
<dbReference type="Gene3D" id="3.30.1380.10">
    <property type="match status" value="1"/>
</dbReference>
<dbReference type="InterPro" id="IPR001657">
    <property type="entry name" value="Hedgehog"/>
</dbReference>
<dbReference type="InterPro" id="IPR009045">
    <property type="entry name" value="Hedgehog_sig/DD-Pept_Zn-bd_sf"/>
</dbReference>
<dbReference type="InterPro" id="IPR050387">
    <property type="entry name" value="Hedgehog_Signaling"/>
</dbReference>
<dbReference type="InterPro" id="IPR000320">
    <property type="entry name" value="Hedgehog_signalling_dom"/>
</dbReference>
<dbReference type="PANTHER" id="PTHR11889">
    <property type="entry name" value="HEDGEHOG"/>
    <property type="match status" value="1"/>
</dbReference>
<dbReference type="PANTHER" id="PTHR11889:SF39">
    <property type="entry name" value="INDIAN HEDGEHOG PROTEIN"/>
    <property type="match status" value="1"/>
</dbReference>
<dbReference type="Pfam" id="PF01085">
    <property type="entry name" value="HH_signal"/>
    <property type="match status" value="1"/>
</dbReference>
<dbReference type="PRINTS" id="PR00632">
    <property type="entry name" value="SONICHHOG"/>
</dbReference>
<dbReference type="SUPFAM" id="SSF55166">
    <property type="entry name" value="Hedgehog/DD-peptidase"/>
    <property type="match status" value="1"/>
</dbReference>
<reference key="1">
    <citation type="journal article" date="1996" name="Proc. Natl. Acad. Sci. U.S.A.">
        <title>Evolutionary analyses of hedgehog and Hoxd-10 genes in fish species closely related to the zebrafish.</title>
        <authorList>
            <person name="Zardoya R."/>
            <person name="Abouheif E."/>
            <person name="Meyer A."/>
        </authorList>
    </citation>
    <scope>NUCLEOTIDE SEQUENCE [GENOMIC DNA]</scope>
    <source>
        <tissue>Muscle</tissue>
    </source>
</reference>
<accession>P79719</accession>
<name>IHH_DANAP</name>
<sequence length="58" mass="6658">VMNLWPGVRLRVTEGWDEDGHHSEESLHYEGRAVDITTSDRDRNKYAMLARLAVEAGF</sequence>
<comment type="function">
    <text evidence="1">Intercellular signal essential for a variety of patterning events during development.</text>
</comment>
<comment type="subcellular location">
    <subcellularLocation>
        <location evidence="1">Cell membrane</location>
    </subcellularLocation>
    <subcellularLocation>
        <location evidence="1">Secreted</location>
        <location evidence="1">Extracellular space</location>
    </subcellularLocation>
    <text evidence="1">Indian hedgehog protein N-product: Cell membrane; Lipid-anchor; Extracellular side. The N-terminal peptide remains associated with the cell surface. Indian hedgehog protein C-product: Secreted, extracellular space. The C-terminal peptide diffuses from the cell.</text>
</comment>
<comment type="domain">
    <text evidence="1">The indian hedgehog protein N-product binds calcium and zinc ions; this stabilizes the protein fold and is essential for protein-protein interactions mediated by this domain.</text>
</comment>
<comment type="PTM">
    <text evidence="1">The C-terminal domain displays an autoproteolysis activity and a cholesterol transferase activity. Both activities result in the cleavage of the full-length protein and covalent attachment of a cholesterol moiety to the C-terminal of the newly generated N-terminal fragment (N-product). The N-product is the active species in both local and long-range signaling, whereas the C-product has no signaling activity (By similarity).</text>
</comment>
<comment type="PTM">
    <text evidence="1">Cholesterylation is required for N-product targeting to lipid rafts and multimerization.</text>
</comment>
<comment type="PTM">
    <text evidence="1">N-palmitoylation is required for N-product multimerization and full activity.</text>
</comment>
<comment type="similarity">
    <text evidence="3">Belongs to the hedgehog family.</text>
</comment>
<organism>
    <name type="scientific">Danio albolineatus pulcher</name>
    <name type="common">Blue-redstripe danio</name>
    <dbReference type="NCBI Taxonomy" id="38751"/>
    <lineage>
        <taxon>Eukaryota</taxon>
        <taxon>Metazoa</taxon>
        <taxon>Chordata</taxon>
        <taxon>Craniata</taxon>
        <taxon>Vertebrata</taxon>
        <taxon>Euteleostomi</taxon>
        <taxon>Actinopterygii</taxon>
        <taxon>Neopterygii</taxon>
        <taxon>Teleostei</taxon>
        <taxon>Ostariophysi</taxon>
        <taxon>Cypriniformes</taxon>
        <taxon>Danionidae</taxon>
        <taxon>Danioninae</taxon>
        <taxon>Danio</taxon>
    </lineage>
</organism>